<comment type="function">
    <text evidence="2">Catalyzes the conversion of dihydroorotate to orotate with quinone as electron acceptor. Required for UMP biosynthesis via de novo pathway.</text>
</comment>
<comment type="catalytic activity">
    <reaction evidence="2">
        <text>(S)-dihydroorotate + a quinone = orotate + a quinol</text>
        <dbReference type="Rhea" id="RHEA:30187"/>
        <dbReference type="ChEBI" id="CHEBI:24646"/>
        <dbReference type="ChEBI" id="CHEBI:30839"/>
        <dbReference type="ChEBI" id="CHEBI:30864"/>
        <dbReference type="ChEBI" id="CHEBI:132124"/>
        <dbReference type="EC" id="1.3.5.2"/>
    </reaction>
</comment>
<comment type="cofactor">
    <cofactor evidence="2">
        <name>FMN</name>
        <dbReference type="ChEBI" id="CHEBI:58210"/>
    </cofactor>
    <text evidence="2">Binds 1 FMN per subunit.</text>
</comment>
<comment type="pathway">
    <text>Pyrimidine metabolism; UMP biosynthesis via de novo pathway; orotate from (S)-dihydroorotate (quinone route): step 1/1.</text>
</comment>
<comment type="subunit">
    <text evidence="2">Monomer.</text>
</comment>
<comment type="subcellular location">
    <subcellularLocation>
        <location evidence="2">Mitochondrion inner membrane</location>
        <topology evidence="2">Single-pass membrane protein</topology>
    </subcellularLocation>
</comment>
<comment type="PTM">
    <text evidence="1">The uncleaved transit peptide is required for mitochondrial targeting and proper membrane integration.</text>
</comment>
<comment type="similarity">
    <text evidence="4">Belongs to the dihydroorotate dehydrogenase family. Type 2 subfamily.</text>
</comment>
<organism>
    <name type="scientific">Mus musculus</name>
    <name type="common">Mouse</name>
    <dbReference type="NCBI Taxonomy" id="10090"/>
    <lineage>
        <taxon>Eukaryota</taxon>
        <taxon>Metazoa</taxon>
        <taxon>Chordata</taxon>
        <taxon>Craniata</taxon>
        <taxon>Vertebrata</taxon>
        <taxon>Euteleostomi</taxon>
        <taxon>Mammalia</taxon>
        <taxon>Eutheria</taxon>
        <taxon>Euarchontoglires</taxon>
        <taxon>Glires</taxon>
        <taxon>Rodentia</taxon>
        <taxon>Myomorpha</taxon>
        <taxon>Muroidea</taxon>
        <taxon>Muridae</taxon>
        <taxon>Murinae</taxon>
        <taxon>Mus</taxon>
        <taxon>Mus</taxon>
    </lineage>
</organism>
<keyword id="KW-0285">Flavoprotein</keyword>
<keyword id="KW-0288">FMN</keyword>
<keyword id="KW-0472">Membrane</keyword>
<keyword id="KW-0496">Mitochondrion</keyword>
<keyword id="KW-0999">Mitochondrion inner membrane</keyword>
<keyword id="KW-0560">Oxidoreductase</keyword>
<keyword id="KW-0665">Pyrimidine biosynthesis</keyword>
<keyword id="KW-1185">Reference proteome</keyword>
<keyword id="KW-0809">Transit peptide</keyword>
<keyword id="KW-0812">Transmembrane</keyword>
<keyword id="KW-1133">Transmembrane helix</keyword>
<evidence type="ECO:0000250" key="1"/>
<evidence type="ECO:0000250" key="2">
    <source>
        <dbReference type="UniProtKB" id="Q02127"/>
    </source>
</evidence>
<evidence type="ECO:0000255" key="3"/>
<evidence type="ECO:0000305" key="4"/>
<name>PYRD_MOUSE</name>
<dbReference type="EC" id="1.3.5.2" evidence="2"/>
<dbReference type="EMBL" id="AF029667">
    <property type="protein sequence ID" value="AAB82948.2"/>
    <property type="molecule type" value="mRNA"/>
</dbReference>
<dbReference type="EMBL" id="BC019542">
    <property type="protein sequence ID" value="AAH19542.1"/>
    <property type="molecule type" value="mRNA"/>
</dbReference>
<dbReference type="EMBL" id="BC027829">
    <property type="protein sequence ID" value="AAH27829.1"/>
    <property type="molecule type" value="mRNA"/>
</dbReference>
<dbReference type="EMBL" id="BC045206">
    <property type="protein sequence ID" value="AAH45206.1"/>
    <property type="molecule type" value="mRNA"/>
</dbReference>
<dbReference type="CCDS" id="CCDS40471.1"/>
<dbReference type="RefSeq" id="NP_064430.1">
    <property type="nucleotide sequence ID" value="NM_020046.3"/>
</dbReference>
<dbReference type="SMR" id="O35435"/>
<dbReference type="BioGRID" id="208162">
    <property type="interactions" value="40"/>
</dbReference>
<dbReference type="FunCoup" id="O35435">
    <property type="interactions" value="1945"/>
</dbReference>
<dbReference type="IntAct" id="O35435">
    <property type="interactions" value="1"/>
</dbReference>
<dbReference type="STRING" id="10090.ENSMUSP00000115934"/>
<dbReference type="BindingDB" id="O35435"/>
<dbReference type="ChEMBL" id="CHEMBL2991"/>
<dbReference type="DrugCentral" id="O35435"/>
<dbReference type="GuidetoPHARMACOLOGY" id="2604"/>
<dbReference type="PhosphoSitePlus" id="O35435"/>
<dbReference type="PaxDb" id="10090-ENSMUSP00000070303"/>
<dbReference type="PeptideAtlas" id="O35435"/>
<dbReference type="ProteomicsDB" id="300213"/>
<dbReference type="Pumba" id="O35435"/>
<dbReference type="Antibodypedia" id="2311">
    <property type="antibodies" value="335 antibodies from 35 providers"/>
</dbReference>
<dbReference type="DNASU" id="56749"/>
<dbReference type="Ensembl" id="ENSMUST00000123605.9">
    <property type="protein sequence ID" value="ENSMUSP00000115934.2"/>
    <property type="gene ID" value="ENSMUSG00000031730.19"/>
</dbReference>
<dbReference type="GeneID" id="56749"/>
<dbReference type="KEGG" id="mmu:56749"/>
<dbReference type="UCSC" id="uc009nip.1">
    <property type="organism name" value="mouse"/>
</dbReference>
<dbReference type="AGR" id="MGI:1928378"/>
<dbReference type="CTD" id="1723"/>
<dbReference type="MGI" id="MGI:1928378">
    <property type="gene designation" value="Dhodh"/>
</dbReference>
<dbReference type="VEuPathDB" id="HostDB:ENSMUSG00000031730"/>
<dbReference type="eggNOG" id="KOG1436">
    <property type="taxonomic scope" value="Eukaryota"/>
</dbReference>
<dbReference type="GeneTree" id="ENSGT00500000044924"/>
<dbReference type="HOGENOM" id="CLU_013640_0_2_1"/>
<dbReference type="InParanoid" id="O35435"/>
<dbReference type="OMA" id="ERIKMGA"/>
<dbReference type="OrthoDB" id="14784at2759"/>
<dbReference type="PhylomeDB" id="O35435"/>
<dbReference type="TreeFam" id="TF105973"/>
<dbReference type="Reactome" id="R-MMU-500753">
    <property type="pathway name" value="Pyrimidine biosynthesis"/>
</dbReference>
<dbReference type="UniPathway" id="UPA00070">
    <property type="reaction ID" value="UER00946"/>
</dbReference>
<dbReference type="BioGRID-ORCS" id="56749">
    <property type="hits" value="25 hits in 81 CRISPR screens"/>
</dbReference>
<dbReference type="ChiTaRS" id="Dhodh">
    <property type="organism name" value="mouse"/>
</dbReference>
<dbReference type="PRO" id="PR:O35435"/>
<dbReference type="Proteomes" id="UP000000589">
    <property type="component" value="Chromosome 8"/>
</dbReference>
<dbReference type="RNAct" id="O35435">
    <property type="molecule type" value="protein"/>
</dbReference>
<dbReference type="Bgee" id="ENSMUSG00000031730">
    <property type="expression patterns" value="Expressed in embryonic cell in blastocyst and 271 other cell types or tissues"/>
</dbReference>
<dbReference type="ExpressionAtlas" id="O35435">
    <property type="expression patterns" value="baseline and differential"/>
</dbReference>
<dbReference type="GO" id="GO:0005829">
    <property type="term" value="C:cytosol"/>
    <property type="evidence" value="ECO:0007669"/>
    <property type="project" value="Ensembl"/>
</dbReference>
<dbReference type="GO" id="GO:0005743">
    <property type="term" value="C:mitochondrial inner membrane"/>
    <property type="evidence" value="ECO:0007669"/>
    <property type="project" value="UniProtKB-SubCell"/>
</dbReference>
<dbReference type="GO" id="GO:0005739">
    <property type="term" value="C:mitochondrion"/>
    <property type="evidence" value="ECO:0007005"/>
    <property type="project" value="MGI"/>
</dbReference>
<dbReference type="GO" id="GO:0005654">
    <property type="term" value="C:nucleoplasm"/>
    <property type="evidence" value="ECO:0007669"/>
    <property type="project" value="Ensembl"/>
</dbReference>
<dbReference type="GO" id="GO:0004151">
    <property type="term" value="F:dihydroorotase activity"/>
    <property type="evidence" value="ECO:0000315"/>
    <property type="project" value="MGI"/>
</dbReference>
<dbReference type="GO" id="GO:0106430">
    <property type="term" value="F:dihydroorotate dehydrogenase (quinone) activity"/>
    <property type="evidence" value="ECO:0007669"/>
    <property type="project" value="UniProtKB-EC"/>
</dbReference>
<dbReference type="GO" id="GO:0004152">
    <property type="term" value="F:dihydroorotate dehydrogenase activity"/>
    <property type="evidence" value="ECO:0000315"/>
    <property type="project" value="MGI"/>
</dbReference>
<dbReference type="GO" id="GO:0006207">
    <property type="term" value="P:'de novo' pyrimidine nucleobase biosynthetic process"/>
    <property type="evidence" value="ECO:0007669"/>
    <property type="project" value="InterPro"/>
</dbReference>
<dbReference type="GO" id="GO:0044205">
    <property type="term" value="P:'de novo' UMP biosynthetic process"/>
    <property type="evidence" value="ECO:0000315"/>
    <property type="project" value="MGI"/>
</dbReference>
<dbReference type="GO" id="GO:0006225">
    <property type="term" value="P:UDP biosynthetic process"/>
    <property type="evidence" value="ECO:0000315"/>
    <property type="project" value="MGI"/>
</dbReference>
<dbReference type="CDD" id="cd04738">
    <property type="entry name" value="DHOD_2_like"/>
    <property type="match status" value="1"/>
</dbReference>
<dbReference type="FunFam" id="3.20.20.70:FF:000066">
    <property type="entry name" value="Dihydroorotate dehydrogenase (quinone), mitochondrial"/>
    <property type="match status" value="1"/>
</dbReference>
<dbReference type="Gene3D" id="3.20.20.70">
    <property type="entry name" value="Aldolase class I"/>
    <property type="match status" value="1"/>
</dbReference>
<dbReference type="HAMAP" id="MF_00225">
    <property type="entry name" value="DHO_dh_type2"/>
    <property type="match status" value="1"/>
</dbReference>
<dbReference type="InterPro" id="IPR013785">
    <property type="entry name" value="Aldolase_TIM"/>
</dbReference>
<dbReference type="InterPro" id="IPR050074">
    <property type="entry name" value="DHO_dehydrogenase"/>
</dbReference>
<dbReference type="InterPro" id="IPR005719">
    <property type="entry name" value="Dihydroorotate_DH_2"/>
</dbReference>
<dbReference type="InterPro" id="IPR005720">
    <property type="entry name" value="Dihydroorotate_DH_cat"/>
</dbReference>
<dbReference type="InterPro" id="IPR001295">
    <property type="entry name" value="Dihydroorotate_DH_CS"/>
</dbReference>
<dbReference type="NCBIfam" id="NF003645">
    <property type="entry name" value="PRK05286.1-2"/>
    <property type="match status" value="1"/>
</dbReference>
<dbReference type="NCBIfam" id="NF003652">
    <property type="entry name" value="PRK05286.2-5"/>
    <property type="match status" value="1"/>
</dbReference>
<dbReference type="NCBIfam" id="TIGR01036">
    <property type="entry name" value="pyrD_sub2"/>
    <property type="match status" value="1"/>
</dbReference>
<dbReference type="PANTHER" id="PTHR48109:SF4">
    <property type="entry name" value="DIHYDROOROTATE DEHYDROGENASE (QUINONE), MITOCHONDRIAL"/>
    <property type="match status" value="1"/>
</dbReference>
<dbReference type="PANTHER" id="PTHR48109">
    <property type="entry name" value="DIHYDROOROTATE DEHYDROGENASE (QUINONE), MITOCHONDRIAL-RELATED"/>
    <property type="match status" value="1"/>
</dbReference>
<dbReference type="Pfam" id="PF01180">
    <property type="entry name" value="DHO_dh"/>
    <property type="match status" value="1"/>
</dbReference>
<dbReference type="SUPFAM" id="SSF51395">
    <property type="entry name" value="FMN-linked oxidoreductases"/>
    <property type="match status" value="1"/>
</dbReference>
<dbReference type="PROSITE" id="PS00911">
    <property type="entry name" value="DHODEHASE_1"/>
    <property type="match status" value="1"/>
</dbReference>
<dbReference type="PROSITE" id="PS00912">
    <property type="entry name" value="DHODEHASE_2"/>
    <property type="match status" value="1"/>
</dbReference>
<reference key="1">
    <citation type="submission" date="2000-06" db="EMBL/GenBank/DDBJ databases">
        <title>Cloning of murine dihydroorotate dehydrogenase.</title>
        <authorList>
            <person name="Knecht W."/>
            <person name="Ullrich A."/>
            <person name="Loeffler M."/>
        </authorList>
    </citation>
    <scope>NUCLEOTIDE SEQUENCE [MRNA]</scope>
</reference>
<reference key="2">
    <citation type="journal article" date="2004" name="Genome Res.">
        <title>The status, quality, and expansion of the NIH full-length cDNA project: the Mammalian Gene Collection (MGC).</title>
        <authorList>
            <consortium name="The MGC Project Team"/>
        </authorList>
    </citation>
    <scope>NUCLEOTIDE SEQUENCE [LARGE SCALE MRNA]</scope>
    <source>
        <strain>C57BL/6J</strain>
        <tissue>Mammary gland</tissue>
    </source>
</reference>
<reference key="3">
    <citation type="journal article" date="2010" name="Cell">
        <title>A tissue-specific atlas of mouse protein phosphorylation and expression.</title>
        <authorList>
            <person name="Huttlin E.L."/>
            <person name="Jedrychowski M.P."/>
            <person name="Elias J.E."/>
            <person name="Goswami T."/>
            <person name="Rad R."/>
            <person name="Beausoleil S.A."/>
            <person name="Villen J."/>
            <person name="Haas W."/>
            <person name="Sowa M.E."/>
            <person name="Gygi S.P."/>
        </authorList>
    </citation>
    <scope>IDENTIFICATION BY MASS SPECTROMETRY [LARGE SCALE ANALYSIS]</scope>
    <source>
        <tissue>Brain</tissue>
        <tissue>Brown adipose tissue</tissue>
        <tissue>Heart</tissue>
        <tissue>Kidney</tissue>
        <tissue>Liver</tissue>
        <tissue>Spleen</tissue>
        <tissue>Testis</tissue>
    </source>
</reference>
<sequence length="395" mass="42700">MAWRQLRKRALDAAIILGGGGLLFTSYLTATGDDHFYAEYLMPALQRLLDPESAHRLAVRVISLGLLPRATFQDSNMLEVRVLGHKFRNPVGIAAGFDKHGEAVDGLYKLGFGFVEVGSVTPQPQEGNPRPRVFRLPEDQAVINRYGFNSHGLSAVEHRLRARQQKQTQLTTDGLPLGINLGKNKTSVDAAADYVEGVRILGPLADYLVVNVSSPNTAGLRSLQGKTELRRLLSKVLQERDALKGPQKPAVLVKIAPDLTAQDKEDIASVARELGIDGLIITNTTVSRPVGLQGALRSETGGLSGKPLRDLSTQTIREMYALTQGTIPIIGVGGVSSGQDALEKIQAGASLVQLYTALTFLGPPVVARVKRELEALLKERGFNTVTDAIGVDHRR</sequence>
<proteinExistence type="evidence at protein level"/>
<feature type="chain" id="PRO_0000029885" description="Dihydroorotate dehydrogenase (quinone), mitochondrial">
    <location>
        <begin position="1"/>
        <end position="395"/>
    </location>
</feature>
<feature type="transit peptide" description="Mitochondrion; not cleaved" evidence="1">
    <location>
        <begin position="1"/>
        <end position="10"/>
    </location>
</feature>
<feature type="topological domain" description="Mitochondrial matrix" evidence="3">
    <location>
        <begin position="1"/>
        <end position="10"/>
    </location>
</feature>
<feature type="transmembrane region" description="Helical" evidence="3">
    <location>
        <begin position="11"/>
        <end position="30"/>
    </location>
</feature>
<feature type="topological domain" description="Mitochondrial intermembrane" evidence="3">
    <location>
        <begin position="31"/>
        <end position="395"/>
    </location>
</feature>
<feature type="active site" description="Nucleophile" evidence="1">
    <location>
        <position position="214"/>
    </location>
</feature>
<feature type="binding site" evidence="1">
    <location>
        <begin position="95"/>
        <end position="99"/>
    </location>
    <ligand>
        <name>FMN</name>
        <dbReference type="ChEBI" id="CHEBI:58210"/>
    </ligand>
</feature>
<feature type="binding site" evidence="1">
    <location>
        <position position="99"/>
    </location>
    <ligand>
        <name>substrate</name>
    </ligand>
</feature>
<feature type="binding site" evidence="1">
    <location>
        <position position="119"/>
    </location>
    <ligand>
        <name>FMN</name>
        <dbReference type="ChEBI" id="CHEBI:58210"/>
    </ligand>
</feature>
<feature type="binding site" evidence="1">
    <location>
        <begin position="144"/>
        <end position="148"/>
    </location>
    <ligand>
        <name>substrate</name>
    </ligand>
</feature>
<feature type="binding site" evidence="1">
    <location>
        <position position="180"/>
    </location>
    <ligand>
        <name>FMN</name>
        <dbReference type="ChEBI" id="CHEBI:58210"/>
    </ligand>
</feature>
<feature type="binding site" evidence="1">
    <location>
        <begin position="211"/>
        <end position="216"/>
    </location>
    <ligand>
        <name>substrate</name>
    </ligand>
</feature>
<feature type="binding site" evidence="1">
    <location>
        <position position="211"/>
    </location>
    <ligand>
        <name>FMN</name>
        <dbReference type="ChEBI" id="CHEBI:58210"/>
    </ligand>
</feature>
<feature type="binding site" evidence="1">
    <location>
        <position position="254"/>
    </location>
    <ligand>
        <name>FMN</name>
        <dbReference type="ChEBI" id="CHEBI:58210"/>
    </ligand>
</feature>
<feature type="binding site" evidence="1">
    <location>
        <position position="282"/>
    </location>
    <ligand>
        <name>FMN</name>
        <dbReference type="ChEBI" id="CHEBI:58210"/>
    </ligand>
</feature>
<feature type="binding site" evidence="1">
    <location>
        <begin position="283"/>
        <end position="284"/>
    </location>
    <ligand>
        <name>substrate</name>
    </ligand>
</feature>
<feature type="binding site" evidence="1">
    <location>
        <position position="305"/>
    </location>
    <ligand>
        <name>FMN</name>
        <dbReference type="ChEBI" id="CHEBI:58210"/>
    </ligand>
</feature>
<feature type="binding site" evidence="1">
    <location>
        <position position="334"/>
    </location>
    <ligand>
        <name>FMN</name>
        <dbReference type="ChEBI" id="CHEBI:58210"/>
    </ligand>
</feature>
<feature type="binding site" evidence="1">
    <location>
        <begin position="355"/>
        <end position="356"/>
    </location>
    <ligand>
        <name>FMN</name>
        <dbReference type="ChEBI" id="CHEBI:58210"/>
    </ligand>
</feature>
<gene>
    <name type="primary">Dhodh</name>
</gene>
<protein>
    <recommendedName>
        <fullName>Dihydroorotate dehydrogenase (quinone), mitochondrial</fullName>
        <shortName>DHOdehase</shortName>
        <ecNumber evidence="2">1.3.5.2</ecNumber>
    </recommendedName>
    <alternativeName>
        <fullName>Dihydroorotate oxidase</fullName>
    </alternativeName>
</protein>
<accession>O35435</accession>